<feature type="chain" id="PRO_0000295989" description="Small ribosomal subunit protein uS12">
    <location>
        <begin position="1"/>
        <end position="135"/>
    </location>
</feature>
<feature type="region of interest" description="Disordered" evidence="3">
    <location>
        <begin position="1"/>
        <end position="23"/>
    </location>
</feature>
<feature type="modified residue" description="3-methylthioaspartic acid" evidence="1">
    <location>
        <position position="102"/>
    </location>
</feature>
<name>RS12_LACGA</name>
<organism>
    <name type="scientific">Lactobacillus gasseri (strain ATCC 33323 / DSM 20243 / BCRC 14619 / CIP 102991 / JCM 1131 / KCTC 3163 / NCIMB 11718 / NCTC 13722 / AM63)</name>
    <dbReference type="NCBI Taxonomy" id="324831"/>
    <lineage>
        <taxon>Bacteria</taxon>
        <taxon>Bacillati</taxon>
        <taxon>Bacillota</taxon>
        <taxon>Bacilli</taxon>
        <taxon>Lactobacillales</taxon>
        <taxon>Lactobacillaceae</taxon>
        <taxon>Lactobacillus</taxon>
    </lineage>
</organism>
<accession>Q046C9</accession>
<reference key="1">
    <citation type="journal article" date="2006" name="Proc. Natl. Acad. Sci. U.S.A.">
        <title>Comparative genomics of the lactic acid bacteria.</title>
        <authorList>
            <person name="Makarova K.S."/>
            <person name="Slesarev A."/>
            <person name="Wolf Y.I."/>
            <person name="Sorokin A."/>
            <person name="Mirkin B."/>
            <person name="Koonin E.V."/>
            <person name="Pavlov A."/>
            <person name="Pavlova N."/>
            <person name="Karamychev V."/>
            <person name="Polouchine N."/>
            <person name="Shakhova V."/>
            <person name="Grigoriev I."/>
            <person name="Lou Y."/>
            <person name="Rohksar D."/>
            <person name="Lucas S."/>
            <person name="Huang K."/>
            <person name="Goodstein D.M."/>
            <person name="Hawkins T."/>
            <person name="Plengvidhya V."/>
            <person name="Welker D."/>
            <person name="Hughes J."/>
            <person name="Goh Y."/>
            <person name="Benson A."/>
            <person name="Baldwin K."/>
            <person name="Lee J.-H."/>
            <person name="Diaz-Muniz I."/>
            <person name="Dosti B."/>
            <person name="Smeianov V."/>
            <person name="Wechter W."/>
            <person name="Barabote R."/>
            <person name="Lorca G."/>
            <person name="Altermann E."/>
            <person name="Barrangou R."/>
            <person name="Ganesan B."/>
            <person name="Xie Y."/>
            <person name="Rawsthorne H."/>
            <person name="Tamir D."/>
            <person name="Parker C."/>
            <person name="Breidt F."/>
            <person name="Broadbent J.R."/>
            <person name="Hutkins R."/>
            <person name="O'Sullivan D."/>
            <person name="Steele J."/>
            <person name="Unlu G."/>
            <person name="Saier M.H. Jr."/>
            <person name="Klaenhammer T."/>
            <person name="Richardson P."/>
            <person name="Kozyavkin S."/>
            <person name="Weimer B.C."/>
            <person name="Mills D.A."/>
        </authorList>
    </citation>
    <scope>NUCLEOTIDE SEQUENCE [LARGE SCALE GENOMIC DNA]</scope>
    <source>
        <strain>ATCC 33323 / DSM 20243 / BCRC 14619 / CIP 102991 / JCM 1131 / KCTC 3163 / NCIMB 11718 / NCTC 13722 / AM63</strain>
    </source>
</reference>
<sequence>MPTINQLVRKGRHSKTTKSDSPALNYAYNSMKKKMNYNPAPQMRGVATRVGTMTPKKPNSALRKYARVRLSNLIEVTAYIPGIGHNLQEHSVVLIRGGRVKDLPGVRYHIIRGALDTAGVDGRKQGRSKYGAKKG</sequence>
<protein>
    <recommendedName>
        <fullName evidence="2">Small ribosomal subunit protein uS12</fullName>
    </recommendedName>
    <alternativeName>
        <fullName evidence="4">30S ribosomal protein S12</fullName>
    </alternativeName>
</protein>
<gene>
    <name evidence="2" type="primary">rpsL</name>
    <name type="ordered locus">LGAS_0287</name>
</gene>
<keyword id="KW-0488">Methylation</keyword>
<keyword id="KW-0687">Ribonucleoprotein</keyword>
<keyword id="KW-0689">Ribosomal protein</keyword>
<keyword id="KW-0694">RNA-binding</keyword>
<keyword id="KW-0699">rRNA-binding</keyword>
<keyword id="KW-0820">tRNA-binding</keyword>
<dbReference type="EMBL" id="CP000413">
    <property type="protein sequence ID" value="ABJ59693.1"/>
    <property type="molecule type" value="Genomic_DNA"/>
</dbReference>
<dbReference type="RefSeq" id="WP_003647838.1">
    <property type="nucleotide sequence ID" value="NZ_WBMG01000001.1"/>
</dbReference>
<dbReference type="SMR" id="Q046C9"/>
<dbReference type="GeneID" id="83569750"/>
<dbReference type="KEGG" id="lga:LGAS_0287"/>
<dbReference type="HOGENOM" id="CLU_104295_1_2_9"/>
<dbReference type="BioCyc" id="LGAS324831:G1G6Y-285-MONOMER"/>
<dbReference type="Proteomes" id="UP000000664">
    <property type="component" value="Chromosome"/>
</dbReference>
<dbReference type="GO" id="GO:0015935">
    <property type="term" value="C:small ribosomal subunit"/>
    <property type="evidence" value="ECO:0007669"/>
    <property type="project" value="InterPro"/>
</dbReference>
<dbReference type="GO" id="GO:0019843">
    <property type="term" value="F:rRNA binding"/>
    <property type="evidence" value="ECO:0007669"/>
    <property type="project" value="UniProtKB-UniRule"/>
</dbReference>
<dbReference type="GO" id="GO:0003735">
    <property type="term" value="F:structural constituent of ribosome"/>
    <property type="evidence" value="ECO:0007669"/>
    <property type="project" value="InterPro"/>
</dbReference>
<dbReference type="GO" id="GO:0000049">
    <property type="term" value="F:tRNA binding"/>
    <property type="evidence" value="ECO:0007669"/>
    <property type="project" value="UniProtKB-UniRule"/>
</dbReference>
<dbReference type="GO" id="GO:0006412">
    <property type="term" value="P:translation"/>
    <property type="evidence" value="ECO:0007669"/>
    <property type="project" value="UniProtKB-UniRule"/>
</dbReference>
<dbReference type="CDD" id="cd03368">
    <property type="entry name" value="Ribosomal_S12"/>
    <property type="match status" value="1"/>
</dbReference>
<dbReference type="FunFam" id="2.40.50.140:FF:000001">
    <property type="entry name" value="30S ribosomal protein S12"/>
    <property type="match status" value="1"/>
</dbReference>
<dbReference type="Gene3D" id="2.40.50.140">
    <property type="entry name" value="Nucleic acid-binding proteins"/>
    <property type="match status" value="1"/>
</dbReference>
<dbReference type="HAMAP" id="MF_00403_B">
    <property type="entry name" value="Ribosomal_uS12_B"/>
    <property type="match status" value="1"/>
</dbReference>
<dbReference type="InterPro" id="IPR012340">
    <property type="entry name" value="NA-bd_OB-fold"/>
</dbReference>
<dbReference type="InterPro" id="IPR006032">
    <property type="entry name" value="Ribosomal_uS12"/>
</dbReference>
<dbReference type="InterPro" id="IPR005679">
    <property type="entry name" value="Ribosomal_uS12_bac"/>
</dbReference>
<dbReference type="NCBIfam" id="TIGR00981">
    <property type="entry name" value="rpsL_bact"/>
    <property type="match status" value="1"/>
</dbReference>
<dbReference type="PANTHER" id="PTHR11652">
    <property type="entry name" value="30S RIBOSOMAL PROTEIN S12 FAMILY MEMBER"/>
    <property type="match status" value="1"/>
</dbReference>
<dbReference type="Pfam" id="PF00164">
    <property type="entry name" value="Ribosom_S12_S23"/>
    <property type="match status" value="1"/>
</dbReference>
<dbReference type="PIRSF" id="PIRSF002133">
    <property type="entry name" value="Ribosomal_S12/S23"/>
    <property type="match status" value="1"/>
</dbReference>
<dbReference type="PRINTS" id="PR01034">
    <property type="entry name" value="RIBOSOMALS12"/>
</dbReference>
<dbReference type="SUPFAM" id="SSF50249">
    <property type="entry name" value="Nucleic acid-binding proteins"/>
    <property type="match status" value="1"/>
</dbReference>
<dbReference type="PROSITE" id="PS00055">
    <property type="entry name" value="RIBOSOMAL_S12"/>
    <property type="match status" value="1"/>
</dbReference>
<proteinExistence type="inferred from homology"/>
<comment type="function">
    <text evidence="2">With S4 and S5 plays an important role in translational accuracy.</text>
</comment>
<comment type="function">
    <text evidence="2">Interacts with and stabilizes bases of the 16S rRNA that are involved in tRNA selection in the A site and with the mRNA backbone. Located at the interface of the 30S and 50S subunits, it traverses the body of the 30S subunit contacting proteins on the other side and probably holding the rRNA structure together. The combined cluster of proteins S8, S12 and S17 appears to hold together the shoulder and platform of the 30S subunit.</text>
</comment>
<comment type="subunit">
    <text evidence="2">Part of the 30S ribosomal subunit. Contacts proteins S8 and S17. May interact with IF1 in the 30S initiation complex.</text>
</comment>
<comment type="similarity">
    <text evidence="2">Belongs to the universal ribosomal protein uS12 family.</text>
</comment>
<evidence type="ECO:0000250" key="1"/>
<evidence type="ECO:0000255" key="2">
    <source>
        <dbReference type="HAMAP-Rule" id="MF_00403"/>
    </source>
</evidence>
<evidence type="ECO:0000256" key="3">
    <source>
        <dbReference type="SAM" id="MobiDB-lite"/>
    </source>
</evidence>
<evidence type="ECO:0000305" key="4"/>